<gene>
    <name evidence="1" type="primary">thrB</name>
    <name type="ordered locus">NTHI0166</name>
</gene>
<organism>
    <name type="scientific">Haemophilus influenzae (strain 86-028NP)</name>
    <dbReference type="NCBI Taxonomy" id="281310"/>
    <lineage>
        <taxon>Bacteria</taxon>
        <taxon>Pseudomonadati</taxon>
        <taxon>Pseudomonadota</taxon>
        <taxon>Gammaproteobacteria</taxon>
        <taxon>Pasteurellales</taxon>
        <taxon>Pasteurellaceae</taxon>
        <taxon>Haemophilus</taxon>
    </lineage>
</organism>
<comment type="function">
    <text evidence="1">Catalyzes the ATP-dependent phosphorylation of L-homoserine to L-homoserine phosphate.</text>
</comment>
<comment type="catalytic activity">
    <reaction evidence="1">
        <text>L-homoserine + ATP = O-phospho-L-homoserine + ADP + H(+)</text>
        <dbReference type="Rhea" id="RHEA:13985"/>
        <dbReference type="ChEBI" id="CHEBI:15378"/>
        <dbReference type="ChEBI" id="CHEBI:30616"/>
        <dbReference type="ChEBI" id="CHEBI:57476"/>
        <dbReference type="ChEBI" id="CHEBI:57590"/>
        <dbReference type="ChEBI" id="CHEBI:456216"/>
        <dbReference type="EC" id="2.7.1.39"/>
    </reaction>
</comment>
<comment type="pathway">
    <text evidence="1">Amino-acid biosynthesis; L-threonine biosynthesis; L-threonine from L-aspartate: step 4/5.</text>
</comment>
<comment type="subcellular location">
    <subcellularLocation>
        <location evidence="1">Cytoplasm</location>
    </subcellularLocation>
</comment>
<comment type="similarity">
    <text evidence="1">Belongs to the GHMP kinase family. Homoserine kinase subfamily.</text>
</comment>
<proteinExistence type="inferred from homology"/>
<keyword id="KW-0028">Amino-acid biosynthesis</keyword>
<keyword id="KW-0067">ATP-binding</keyword>
<keyword id="KW-0963">Cytoplasm</keyword>
<keyword id="KW-0418">Kinase</keyword>
<keyword id="KW-0547">Nucleotide-binding</keyword>
<keyword id="KW-0791">Threonine biosynthesis</keyword>
<keyword id="KW-0808">Transferase</keyword>
<name>KHSE_HAEI8</name>
<sequence>MLRIYAPASSANISVGFDTLGAAISPIDGSLLGDVVQIESISSGFELESAGYFVRKLPKEPQKNIVYQAYVLFSEQLKLRGANVKPLRLTLEKNMPIGSGLGSSACSIVAALVALNQFHNEPFSKMELLEMMGELEGRISGSIHYDNVAPCYLGGVQFMVQSLGNICQKLPFFDNWYWVLAYPGIEVSTAEARAILPKSYTRQNVIAHGRHLGGFVHACHTHQENLAAIMMKDVIAEPYRESLLPNFAEVKQATRDLGALATGISGSGPTIFSIAPDLQTAIKLSSYLESHYLQNNEGFVHVCKVDNEGTREIK</sequence>
<evidence type="ECO:0000255" key="1">
    <source>
        <dbReference type="HAMAP-Rule" id="MF_00384"/>
    </source>
</evidence>
<feature type="chain" id="PRO_1000049133" description="Homoserine kinase">
    <location>
        <begin position="1"/>
        <end position="314"/>
    </location>
</feature>
<feature type="binding site" evidence="1">
    <location>
        <begin position="96"/>
        <end position="106"/>
    </location>
    <ligand>
        <name>ATP</name>
        <dbReference type="ChEBI" id="CHEBI:30616"/>
    </ligand>
</feature>
<reference key="1">
    <citation type="journal article" date="2005" name="J. Bacteriol.">
        <title>Genomic sequence of an otitis media isolate of nontypeable Haemophilus influenzae: comparative study with H. influenzae serotype d, strain KW20.</title>
        <authorList>
            <person name="Harrison A."/>
            <person name="Dyer D.W."/>
            <person name="Gillaspy A."/>
            <person name="Ray W.C."/>
            <person name="Mungur R."/>
            <person name="Carson M.B."/>
            <person name="Zhong H."/>
            <person name="Gipson J."/>
            <person name="Gipson M."/>
            <person name="Johnson L.S."/>
            <person name="Lewis L."/>
            <person name="Bakaletz L.O."/>
            <person name="Munson R.S. Jr."/>
        </authorList>
    </citation>
    <scope>NUCLEOTIDE SEQUENCE [LARGE SCALE GENOMIC DNA]</scope>
    <source>
        <strain>86-028NP</strain>
    </source>
</reference>
<accession>Q4QP96</accession>
<dbReference type="EC" id="2.7.1.39" evidence="1"/>
<dbReference type="EMBL" id="CP000057">
    <property type="protein sequence ID" value="AAX87151.1"/>
    <property type="molecule type" value="Genomic_DNA"/>
</dbReference>
<dbReference type="RefSeq" id="WP_011271869.1">
    <property type="nucleotide sequence ID" value="NC_007146.2"/>
</dbReference>
<dbReference type="SMR" id="Q4QP96"/>
<dbReference type="GeneID" id="93219014"/>
<dbReference type="KEGG" id="hit:NTHI0166"/>
<dbReference type="HOGENOM" id="CLU_041243_1_1_6"/>
<dbReference type="UniPathway" id="UPA00050">
    <property type="reaction ID" value="UER00064"/>
</dbReference>
<dbReference type="Proteomes" id="UP000002525">
    <property type="component" value="Chromosome"/>
</dbReference>
<dbReference type="GO" id="GO:0005737">
    <property type="term" value="C:cytoplasm"/>
    <property type="evidence" value="ECO:0007669"/>
    <property type="project" value="UniProtKB-SubCell"/>
</dbReference>
<dbReference type="GO" id="GO:0005524">
    <property type="term" value="F:ATP binding"/>
    <property type="evidence" value="ECO:0007669"/>
    <property type="project" value="UniProtKB-UniRule"/>
</dbReference>
<dbReference type="GO" id="GO:0004413">
    <property type="term" value="F:homoserine kinase activity"/>
    <property type="evidence" value="ECO:0007669"/>
    <property type="project" value="UniProtKB-UniRule"/>
</dbReference>
<dbReference type="GO" id="GO:0009088">
    <property type="term" value="P:threonine biosynthetic process"/>
    <property type="evidence" value="ECO:0007669"/>
    <property type="project" value="UniProtKB-UniRule"/>
</dbReference>
<dbReference type="Gene3D" id="3.30.230.10">
    <property type="match status" value="1"/>
</dbReference>
<dbReference type="Gene3D" id="3.30.70.890">
    <property type="entry name" value="GHMP kinase, C-terminal domain"/>
    <property type="match status" value="1"/>
</dbReference>
<dbReference type="HAMAP" id="MF_00384">
    <property type="entry name" value="Homoser_kinase"/>
    <property type="match status" value="1"/>
</dbReference>
<dbReference type="InterPro" id="IPR013750">
    <property type="entry name" value="GHMP_kinase_C_dom"/>
</dbReference>
<dbReference type="InterPro" id="IPR036554">
    <property type="entry name" value="GHMP_kinase_C_sf"/>
</dbReference>
<dbReference type="InterPro" id="IPR006204">
    <property type="entry name" value="GHMP_kinase_N_dom"/>
</dbReference>
<dbReference type="InterPro" id="IPR006203">
    <property type="entry name" value="GHMP_knse_ATP-bd_CS"/>
</dbReference>
<dbReference type="InterPro" id="IPR000870">
    <property type="entry name" value="Homoserine_kinase"/>
</dbReference>
<dbReference type="InterPro" id="IPR020568">
    <property type="entry name" value="Ribosomal_Su5_D2-typ_SF"/>
</dbReference>
<dbReference type="InterPro" id="IPR014721">
    <property type="entry name" value="Ribsml_uS5_D2-typ_fold_subgr"/>
</dbReference>
<dbReference type="NCBIfam" id="NF002288">
    <property type="entry name" value="PRK01212.1-4"/>
    <property type="match status" value="1"/>
</dbReference>
<dbReference type="NCBIfam" id="TIGR00191">
    <property type="entry name" value="thrB"/>
    <property type="match status" value="1"/>
</dbReference>
<dbReference type="PANTHER" id="PTHR20861:SF1">
    <property type="entry name" value="HOMOSERINE KINASE"/>
    <property type="match status" value="1"/>
</dbReference>
<dbReference type="PANTHER" id="PTHR20861">
    <property type="entry name" value="HOMOSERINE/4-DIPHOSPHOCYTIDYL-2-C-METHYL-D-ERYTHRITOL KINASE"/>
    <property type="match status" value="1"/>
</dbReference>
<dbReference type="Pfam" id="PF08544">
    <property type="entry name" value="GHMP_kinases_C"/>
    <property type="match status" value="1"/>
</dbReference>
<dbReference type="Pfam" id="PF00288">
    <property type="entry name" value="GHMP_kinases_N"/>
    <property type="match status" value="1"/>
</dbReference>
<dbReference type="PIRSF" id="PIRSF000676">
    <property type="entry name" value="Homoser_kin"/>
    <property type="match status" value="1"/>
</dbReference>
<dbReference type="PRINTS" id="PR00958">
    <property type="entry name" value="HOMSERKINASE"/>
</dbReference>
<dbReference type="SUPFAM" id="SSF55060">
    <property type="entry name" value="GHMP Kinase, C-terminal domain"/>
    <property type="match status" value="1"/>
</dbReference>
<dbReference type="SUPFAM" id="SSF54211">
    <property type="entry name" value="Ribosomal protein S5 domain 2-like"/>
    <property type="match status" value="1"/>
</dbReference>
<dbReference type="PROSITE" id="PS00627">
    <property type="entry name" value="GHMP_KINASES_ATP"/>
    <property type="match status" value="1"/>
</dbReference>
<protein>
    <recommendedName>
        <fullName evidence="1">Homoserine kinase</fullName>
        <shortName evidence="1">HK</shortName>
        <shortName evidence="1">HSK</shortName>
        <ecNumber evidence="1">2.7.1.39</ecNumber>
    </recommendedName>
</protein>